<proteinExistence type="inferred from homology"/>
<organism>
    <name type="scientific">Brucella melitensis biotype 1 (strain ATCC 23456 / CCUG 17765 / NCTC 10094 / 16M)</name>
    <dbReference type="NCBI Taxonomy" id="224914"/>
    <lineage>
        <taxon>Bacteria</taxon>
        <taxon>Pseudomonadati</taxon>
        <taxon>Pseudomonadota</taxon>
        <taxon>Alphaproteobacteria</taxon>
        <taxon>Hyphomicrobiales</taxon>
        <taxon>Brucellaceae</taxon>
        <taxon>Brucella/Ochrobactrum group</taxon>
        <taxon>Brucella</taxon>
    </lineage>
</organism>
<dbReference type="EMBL" id="AE008918">
    <property type="protein sequence ID" value="AAL53369.1"/>
    <property type="molecule type" value="Genomic_DNA"/>
</dbReference>
<dbReference type="PIR" id="AF3525">
    <property type="entry name" value="AF3525"/>
</dbReference>
<dbReference type="RefSeq" id="WP_011005524.1">
    <property type="nucleotide sequence ID" value="NC_003318.1"/>
</dbReference>
<dbReference type="SMR" id="Q8YDP7"/>
<dbReference type="GeneID" id="29595389"/>
<dbReference type="KEGG" id="bme:BMEII0128"/>
<dbReference type="eggNOG" id="COG5441">
    <property type="taxonomic scope" value="Bacteria"/>
</dbReference>
<dbReference type="PhylomeDB" id="Q8YDP7"/>
<dbReference type="PRO" id="PR:Q8YDP7"/>
<dbReference type="Proteomes" id="UP000000419">
    <property type="component" value="Chromosome II"/>
</dbReference>
<dbReference type="CDD" id="cd15488">
    <property type="entry name" value="Tm-1-like"/>
    <property type="match status" value="1"/>
</dbReference>
<dbReference type="Gene3D" id="3.40.50.12030">
    <property type="entry name" value="Uncharacterised protein family UPF0261, NC domain"/>
    <property type="match status" value="1"/>
</dbReference>
<dbReference type="Gene3D" id="3.40.50.12020">
    <property type="entry name" value="Uncharacterised protein family UPF0261, NN domain"/>
    <property type="match status" value="1"/>
</dbReference>
<dbReference type="HAMAP" id="MF_00677">
    <property type="entry name" value="UPF0261"/>
    <property type="match status" value="1"/>
</dbReference>
<dbReference type="InterPro" id="IPR051353">
    <property type="entry name" value="Tobamovirus_resist_UPF0261"/>
</dbReference>
<dbReference type="InterPro" id="IPR008322">
    <property type="entry name" value="UPF0261"/>
</dbReference>
<dbReference type="InterPro" id="IPR056778">
    <property type="entry name" value="UPF0261_C"/>
</dbReference>
<dbReference type="InterPro" id="IPR044122">
    <property type="entry name" value="UPF0261_N"/>
</dbReference>
<dbReference type="NCBIfam" id="NF002674">
    <property type="entry name" value="PRK02399.1-2"/>
    <property type="match status" value="1"/>
</dbReference>
<dbReference type="NCBIfam" id="NF002676">
    <property type="entry name" value="PRK02399.1-4"/>
    <property type="match status" value="1"/>
</dbReference>
<dbReference type="PANTHER" id="PTHR31862">
    <property type="entry name" value="UPF0261 DOMAIN PROTEIN (AFU_ORTHOLOGUE AFUA_1G10120)"/>
    <property type="match status" value="1"/>
</dbReference>
<dbReference type="PANTHER" id="PTHR31862:SF1">
    <property type="entry name" value="UPF0261 DOMAIN PROTEIN (AFU_ORTHOLOGUE AFUA_1G10120)"/>
    <property type="match status" value="1"/>
</dbReference>
<dbReference type="Pfam" id="PF06792">
    <property type="entry name" value="UPF0261"/>
    <property type="match status" value="1"/>
</dbReference>
<dbReference type="Pfam" id="PF23189">
    <property type="entry name" value="UPF0261_C"/>
    <property type="match status" value="1"/>
</dbReference>
<dbReference type="PIRSF" id="PIRSF033271">
    <property type="entry name" value="UCP033271"/>
    <property type="match status" value="1"/>
</dbReference>
<protein>
    <recommendedName>
        <fullName evidence="1">UPF0261 protein BMEII0128</fullName>
    </recommendedName>
</protein>
<sequence>MTAHTNSPRIMVIGTGDTKSDELLFMADVIERAGGSPVMIDVSILGNPPYEPAYSKHDVAEAAGTTVQAIIDSGDEHSAMALMAEGATALVRGLSQRGQVDGMIALGGSLGTDLALDIAAILPLVVPKFIVSTIAYSHLLPPERIAPDLMMILWAGGLYGLNPICRSVLSQACGAVVGAAKLVEKPSAEKPLIGMTHLGSSCLKYMRFLKPELEKRGYDVAIFHATGMGGRAYEAVAAQKGFVAVFDFCIQEVTNAESGSVVTSGPDRMENAGRAGIPQIIAPGAVDMVDMPAWQNVPEQFRDRPYHAHNRLIASITVSPEQRRAVARVVAAKLERAAAPVAFILPTGGVQEWDRNGEPLHEPEALGAFLDEMRGAVSGTITFEEVDAHINAPEFASRALAVFDRWVAEGIVVKGNVA</sequence>
<name>Y3128_BRUME</name>
<accession>Q8YDP7</accession>
<reference key="1">
    <citation type="journal article" date="2002" name="Proc. Natl. Acad. Sci. U.S.A.">
        <title>The genome sequence of the facultative intracellular pathogen Brucella melitensis.</title>
        <authorList>
            <person name="DelVecchio V.G."/>
            <person name="Kapatral V."/>
            <person name="Redkar R.J."/>
            <person name="Patra G."/>
            <person name="Mujer C."/>
            <person name="Los T."/>
            <person name="Ivanova N."/>
            <person name="Anderson I."/>
            <person name="Bhattacharyya A."/>
            <person name="Lykidis A."/>
            <person name="Reznik G."/>
            <person name="Jablonski L."/>
            <person name="Larsen N."/>
            <person name="D'Souza M."/>
            <person name="Bernal A."/>
            <person name="Mazur M."/>
            <person name="Goltsman E."/>
            <person name="Selkov E."/>
            <person name="Elzer P.H."/>
            <person name="Hagius S."/>
            <person name="O'Callaghan D."/>
            <person name="Letesson J.-J."/>
            <person name="Haselkorn R."/>
            <person name="Kyrpides N.C."/>
            <person name="Overbeek R."/>
        </authorList>
    </citation>
    <scope>NUCLEOTIDE SEQUENCE [LARGE SCALE GENOMIC DNA]</scope>
    <source>
        <strain>ATCC 23456 / CCUG 17765 / NCTC 10094 / 16M</strain>
    </source>
</reference>
<evidence type="ECO:0000255" key="1">
    <source>
        <dbReference type="HAMAP-Rule" id="MF_00677"/>
    </source>
</evidence>
<feature type="chain" id="PRO_0000220209" description="UPF0261 protein BMEII0128">
    <location>
        <begin position="1"/>
        <end position="418"/>
    </location>
</feature>
<comment type="similarity">
    <text evidence="1">Belongs to the UPF0261 family.</text>
</comment>
<gene>
    <name type="ordered locus">BMEII0128</name>
</gene>